<sequence length="368" mass="42039">MSKKTDTPDYKPSIYSLTRDELIAWAIEHGEKKFRASQIWDWLYKKRVQSFDEMTNISKDFIALLNENFVVNPLKQRIVQESADGTVKYLFELPDGMLIETVLMRQYYGLSVCVTTQVGCNIGCTFCASGLIKKQRDLNNGEITAQIMLVQKYFDERGQGERVSHIVVMGIGEPFDNYTNVLKFLRTVNDDNGLAIGARHITVSTSGLAHKIREFANEGVQVNLAVSLHAPNNELRSSIMRINRSFPLEKLFAAIEYYIETTNRRVTFEYIMLNGVNDTPENAQELADLTKKIRKLSYVNLIPYNPVSEHDQYSRSPKERVEAFYDVLKKNGVNCVVRQEHGTDIDAACGQLRSNTMKRDRQKAKVGR</sequence>
<keyword id="KW-0004">4Fe-4S</keyword>
<keyword id="KW-0963">Cytoplasm</keyword>
<keyword id="KW-1015">Disulfide bond</keyword>
<keyword id="KW-0408">Iron</keyword>
<keyword id="KW-0411">Iron-sulfur</keyword>
<keyword id="KW-0479">Metal-binding</keyword>
<keyword id="KW-0489">Methyltransferase</keyword>
<keyword id="KW-0698">rRNA processing</keyword>
<keyword id="KW-0949">S-adenosyl-L-methionine</keyword>
<keyword id="KW-0808">Transferase</keyword>
<keyword id="KW-0819">tRNA processing</keyword>
<accession>Q8E6Q7</accession>
<comment type="function">
    <text evidence="1">Specifically methylates position 2 of adenine 2503 in 23S rRNA and position 2 of adenine 37 in tRNAs.</text>
</comment>
<comment type="catalytic activity">
    <reaction evidence="1">
        <text>adenosine(2503) in 23S rRNA + 2 reduced [2Fe-2S]-[ferredoxin] + 2 S-adenosyl-L-methionine = 2-methyladenosine(2503) in 23S rRNA + 5'-deoxyadenosine + L-methionine + 2 oxidized [2Fe-2S]-[ferredoxin] + S-adenosyl-L-homocysteine</text>
        <dbReference type="Rhea" id="RHEA:42916"/>
        <dbReference type="Rhea" id="RHEA-COMP:10000"/>
        <dbReference type="Rhea" id="RHEA-COMP:10001"/>
        <dbReference type="Rhea" id="RHEA-COMP:10152"/>
        <dbReference type="Rhea" id="RHEA-COMP:10282"/>
        <dbReference type="ChEBI" id="CHEBI:17319"/>
        <dbReference type="ChEBI" id="CHEBI:33737"/>
        <dbReference type="ChEBI" id="CHEBI:33738"/>
        <dbReference type="ChEBI" id="CHEBI:57844"/>
        <dbReference type="ChEBI" id="CHEBI:57856"/>
        <dbReference type="ChEBI" id="CHEBI:59789"/>
        <dbReference type="ChEBI" id="CHEBI:74411"/>
        <dbReference type="ChEBI" id="CHEBI:74497"/>
        <dbReference type="EC" id="2.1.1.192"/>
    </reaction>
</comment>
<comment type="catalytic activity">
    <reaction evidence="1">
        <text>adenosine(37) in tRNA + 2 reduced [2Fe-2S]-[ferredoxin] + 2 S-adenosyl-L-methionine = 2-methyladenosine(37) in tRNA + 5'-deoxyadenosine + L-methionine + 2 oxidized [2Fe-2S]-[ferredoxin] + S-adenosyl-L-homocysteine</text>
        <dbReference type="Rhea" id="RHEA:43332"/>
        <dbReference type="Rhea" id="RHEA-COMP:10000"/>
        <dbReference type="Rhea" id="RHEA-COMP:10001"/>
        <dbReference type="Rhea" id="RHEA-COMP:10162"/>
        <dbReference type="Rhea" id="RHEA-COMP:10485"/>
        <dbReference type="ChEBI" id="CHEBI:17319"/>
        <dbReference type="ChEBI" id="CHEBI:33737"/>
        <dbReference type="ChEBI" id="CHEBI:33738"/>
        <dbReference type="ChEBI" id="CHEBI:57844"/>
        <dbReference type="ChEBI" id="CHEBI:57856"/>
        <dbReference type="ChEBI" id="CHEBI:59789"/>
        <dbReference type="ChEBI" id="CHEBI:74411"/>
        <dbReference type="ChEBI" id="CHEBI:74497"/>
        <dbReference type="EC" id="2.1.1.192"/>
    </reaction>
</comment>
<comment type="cofactor">
    <cofactor evidence="1">
        <name>[4Fe-4S] cluster</name>
        <dbReference type="ChEBI" id="CHEBI:49883"/>
    </cofactor>
    <text evidence="1">Binds 1 [4Fe-4S] cluster. The cluster is coordinated with 3 cysteines and an exchangeable S-adenosyl-L-methionine.</text>
</comment>
<comment type="subcellular location">
    <subcellularLocation>
        <location evidence="1">Cytoplasm</location>
    </subcellularLocation>
</comment>
<comment type="miscellaneous">
    <text evidence="1">Reaction proceeds by a ping-pong mechanism involving intermediate methylation of a conserved cysteine residue.</text>
</comment>
<comment type="similarity">
    <text evidence="1">Belongs to the radical SAM superfamily. RlmN family.</text>
</comment>
<gene>
    <name evidence="1" type="primary">rlmN</name>
    <name type="ordered locus">gbs0505</name>
</gene>
<evidence type="ECO:0000255" key="1">
    <source>
        <dbReference type="HAMAP-Rule" id="MF_01849"/>
    </source>
</evidence>
<evidence type="ECO:0000255" key="2">
    <source>
        <dbReference type="PROSITE-ProRule" id="PRU01266"/>
    </source>
</evidence>
<reference key="1">
    <citation type="journal article" date="2002" name="Mol. Microbiol.">
        <title>Genome sequence of Streptococcus agalactiae, a pathogen causing invasive neonatal disease.</title>
        <authorList>
            <person name="Glaser P."/>
            <person name="Rusniok C."/>
            <person name="Buchrieser C."/>
            <person name="Chevalier F."/>
            <person name="Frangeul L."/>
            <person name="Msadek T."/>
            <person name="Zouine M."/>
            <person name="Couve E."/>
            <person name="Lalioui L."/>
            <person name="Poyart C."/>
            <person name="Trieu-Cuot P."/>
            <person name="Kunst F."/>
        </authorList>
    </citation>
    <scope>NUCLEOTIDE SEQUENCE [LARGE SCALE GENOMIC DNA]</scope>
    <source>
        <strain>NEM316</strain>
    </source>
</reference>
<feature type="chain" id="PRO_0000350449" description="Probable dual-specificity RNA methyltransferase RlmN">
    <location>
        <begin position="1"/>
        <end position="368"/>
    </location>
</feature>
<feature type="domain" description="Radical SAM core" evidence="2">
    <location>
        <begin position="106"/>
        <end position="344"/>
    </location>
</feature>
<feature type="active site" description="Proton acceptor" evidence="1">
    <location>
        <position position="100"/>
    </location>
</feature>
<feature type="active site" description="S-methylcysteine intermediate" evidence="1">
    <location>
        <position position="349"/>
    </location>
</feature>
<feature type="binding site" evidence="1">
    <location>
        <position position="120"/>
    </location>
    <ligand>
        <name>[4Fe-4S] cluster</name>
        <dbReference type="ChEBI" id="CHEBI:49883"/>
        <note>4Fe-4S-S-AdoMet</note>
    </ligand>
</feature>
<feature type="binding site" evidence="1">
    <location>
        <position position="124"/>
    </location>
    <ligand>
        <name>[4Fe-4S] cluster</name>
        <dbReference type="ChEBI" id="CHEBI:49883"/>
        <note>4Fe-4S-S-AdoMet</note>
    </ligand>
</feature>
<feature type="binding site" evidence="1">
    <location>
        <position position="127"/>
    </location>
    <ligand>
        <name>[4Fe-4S] cluster</name>
        <dbReference type="ChEBI" id="CHEBI:49883"/>
        <note>4Fe-4S-S-AdoMet</note>
    </ligand>
</feature>
<feature type="binding site" evidence="1">
    <location>
        <begin position="172"/>
        <end position="173"/>
    </location>
    <ligand>
        <name>S-adenosyl-L-methionine</name>
        <dbReference type="ChEBI" id="CHEBI:59789"/>
    </ligand>
</feature>
<feature type="binding site" evidence="1">
    <location>
        <position position="204"/>
    </location>
    <ligand>
        <name>S-adenosyl-L-methionine</name>
        <dbReference type="ChEBI" id="CHEBI:59789"/>
    </ligand>
</feature>
<feature type="binding site" evidence="1">
    <location>
        <begin position="227"/>
        <end position="229"/>
    </location>
    <ligand>
        <name>S-adenosyl-L-methionine</name>
        <dbReference type="ChEBI" id="CHEBI:59789"/>
    </ligand>
</feature>
<feature type="binding site" evidence="1">
    <location>
        <position position="305"/>
    </location>
    <ligand>
        <name>S-adenosyl-L-methionine</name>
        <dbReference type="ChEBI" id="CHEBI:59789"/>
    </ligand>
</feature>
<feature type="disulfide bond" description="(transient)" evidence="1">
    <location>
        <begin position="113"/>
        <end position="349"/>
    </location>
</feature>
<name>RLMN_STRA3</name>
<organism>
    <name type="scientific">Streptococcus agalactiae serotype III (strain NEM316)</name>
    <dbReference type="NCBI Taxonomy" id="211110"/>
    <lineage>
        <taxon>Bacteria</taxon>
        <taxon>Bacillati</taxon>
        <taxon>Bacillota</taxon>
        <taxon>Bacilli</taxon>
        <taxon>Lactobacillales</taxon>
        <taxon>Streptococcaceae</taxon>
        <taxon>Streptococcus</taxon>
    </lineage>
</organism>
<proteinExistence type="inferred from homology"/>
<dbReference type="EC" id="2.1.1.192" evidence="1"/>
<dbReference type="EMBL" id="AL766845">
    <property type="protein sequence ID" value="CAD46149.1"/>
    <property type="molecule type" value="Genomic_DNA"/>
</dbReference>
<dbReference type="RefSeq" id="WP_000039435.1">
    <property type="nucleotide sequence ID" value="NC_004368.1"/>
</dbReference>
<dbReference type="SMR" id="Q8E6Q7"/>
<dbReference type="KEGG" id="san:gbs0505"/>
<dbReference type="eggNOG" id="COG0820">
    <property type="taxonomic scope" value="Bacteria"/>
</dbReference>
<dbReference type="HOGENOM" id="CLU_029101_0_1_9"/>
<dbReference type="Proteomes" id="UP000000823">
    <property type="component" value="Chromosome"/>
</dbReference>
<dbReference type="GO" id="GO:0005737">
    <property type="term" value="C:cytoplasm"/>
    <property type="evidence" value="ECO:0007669"/>
    <property type="project" value="UniProtKB-SubCell"/>
</dbReference>
<dbReference type="GO" id="GO:0051539">
    <property type="term" value="F:4 iron, 4 sulfur cluster binding"/>
    <property type="evidence" value="ECO:0007669"/>
    <property type="project" value="UniProtKB-UniRule"/>
</dbReference>
<dbReference type="GO" id="GO:0046872">
    <property type="term" value="F:metal ion binding"/>
    <property type="evidence" value="ECO:0007669"/>
    <property type="project" value="UniProtKB-KW"/>
</dbReference>
<dbReference type="GO" id="GO:0070040">
    <property type="term" value="F:rRNA (adenine(2503)-C2-)-methyltransferase activity"/>
    <property type="evidence" value="ECO:0007669"/>
    <property type="project" value="UniProtKB-UniRule"/>
</dbReference>
<dbReference type="GO" id="GO:0019843">
    <property type="term" value="F:rRNA binding"/>
    <property type="evidence" value="ECO:0007669"/>
    <property type="project" value="UniProtKB-UniRule"/>
</dbReference>
<dbReference type="GO" id="GO:0002935">
    <property type="term" value="F:tRNA (adenine(37)-C2)-methyltransferase activity"/>
    <property type="evidence" value="ECO:0007669"/>
    <property type="project" value="UniProtKB-UniRule"/>
</dbReference>
<dbReference type="GO" id="GO:0000049">
    <property type="term" value="F:tRNA binding"/>
    <property type="evidence" value="ECO:0007669"/>
    <property type="project" value="UniProtKB-UniRule"/>
</dbReference>
<dbReference type="GO" id="GO:0070475">
    <property type="term" value="P:rRNA base methylation"/>
    <property type="evidence" value="ECO:0007669"/>
    <property type="project" value="UniProtKB-UniRule"/>
</dbReference>
<dbReference type="GO" id="GO:0030488">
    <property type="term" value="P:tRNA methylation"/>
    <property type="evidence" value="ECO:0007669"/>
    <property type="project" value="UniProtKB-UniRule"/>
</dbReference>
<dbReference type="CDD" id="cd01335">
    <property type="entry name" value="Radical_SAM"/>
    <property type="match status" value="1"/>
</dbReference>
<dbReference type="FunFam" id="3.20.20.70:FF:000014">
    <property type="entry name" value="Probable dual-specificity RNA methyltransferase RlmN"/>
    <property type="match status" value="1"/>
</dbReference>
<dbReference type="Gene3D" id="1.10.150.530">
    <property type="match status" value="1"/>
</dbReference>
<dbReference type="Gene3D" id="3.20.20.70">
    <property type="entry name" value="Aldolase class I"/>
    <property type="match status" value="1"/>
</dbReference>
<dbReference type="HAMAP" id="MF_01849">
    <property type="entry name" value="RNA_methyltr_RlmN"/>
    <property type="match status" value="1"/>
</dbReference>
<dbReference type="InterPro" id="IPR013785">
    <property type="entry name" value="Aldolase_TIM"/>
</dbReference>
<dbReference type="InterPro" id="IPR040072">
    <property type="entry name" value="Methyltransferase_A"/>
</dbReference>
<dbReference type="InterPro" id="IPR048641">
    <property type="entry name" value="RlmN_N"/>
</dbReference>
<dbReference type="InterPro" id="IPR027492">
    <property type="entry name" value="RNA_MTrfase_RlmN"/>
</dbReference>
<dbReference type="InterPro" id="IPR004383">
    <property type="entry name" value="rRNA_lsu_MTrfase_RlmN/Cfr"/>
</dbReference>
<dbReference type="InterPro" id="IPR007197">
    <property type="entry name" value="rSAM"/>
</dbReference>
<dbReference type="NCBIfam" id="TIGR00048">
    <property type="entry name" value="rRNA_mod_RlmN"/>
    <property type="match status" value="1"/>
</dbReference>
<dbReference type="PANTHER" id="PTHR30544">
    <property type="entry name" value="23S RRNA METHYLTRANSFERASE"/>
    <property type="match status" value="1"/>
</dbReference>
<dbReference type="PANTHER" id="PTHR30544:SF5">
    <property type="entry name" value="RADICAL SAM CORE DOMAIN-CONTAINING PROTEIN"/>
    <property type="match status" value="1"/>
</dbReference>
<dbReference type="Pfam" id="PF04055">
    <property type="entry name" value="Radical_SAM"/>
    <property type="match status" value="1"/>
</dbReference>
<dbReference type="Pfam" id="PF21016">
    <property type="entry name" value="RlmN_N"/>
    <property type="match status" value="1"/>
</dbReference>
<dbReference type="PIRSF" id="PIRSF006004">
    <property type="entry name" value="CHP00048"/>
    <property type="match status" value="1"/>
</dbReference>
<dbReference type="SFLD" id="SFLDF00275">
    <property type="entry name" value="adenosine_C2_methyltransferase"/>
    <property type="match status" value="1"/>
</dbReference>
<dbReference type="SFLD" id="SFLDG01062">
    <property type="entry name" value="methyltransferase_(Class_A)"/>
    <property type="match status" value="1"/>
</dbReference>
<dbReference type="SUPFAM" id="SSF102114">
    <property type="entry name" value="Radical SAM enzymes"/>
    <property type="match status" value="1"/>
</dbReference>
<dbReference type="PROSITE" id="PS51918">
    <property type="entry name" value="RADICAL_SAM"/>
    <property type="match status" value="1"/>
</dbReference>
<protein>
    <recommendedName>
        <fullName evidence="1">Probable dual-specificity RNA methyltransferase RlmN</fullName>
        <ecNumber evidence="1">2.1.1.192</ecNumber>
    </recommendedName>
    <alternativeName>
        <fullName evidence="1">23S rRNA (adenine(2503)-C(2))-methyltransferase</fullName>
    </alternativeName>
    <alternativeName>
        <fullName evidence="1">23S rRNA m2A2503 methyltransferase</fullName>
    </alternativeName>
    <alternativeName>
        <fullName evidence="1">Ribosomal RNA large subunit methyltransferase N</fullName>
    </alternativeName>
    <alternativeName>
        <fullName evidence="1">tRNA (adenine(37)-C(2))-methyltransferase</fullName>
    </alternativeName>
    <alternativeName>
        <fullName evidence="1">tRNA m2A37 methyltransferase</fullName>
    </alternativeName>
</protein>